<protein>
    <recommendedName>
        <fullName>Serine/threonine-protein phosphatase 2A 55 kDa regulatory subunit B beta isoform</fullName>
    </recommendedName>
    <alternativeName>
        <fullName>PP2A subunit B isoform B55-beta</fullName>
    </alternativeName>
    <alternativeName>
        <fullName>PP2A subunit B isoform PR55-beta</fullName>
    </alternativeName>
    <alternativeName>
        <fullName>PP2A subunit B isoform R2-beta</fullName>
    </alternativeName>
    <alternativeName>
        <fullName>PP2A subunit B isoform beta</fullName>
    </alternativeName>
</protein>
<accession>Q0D2F4</accession>
<accession>Q28HA4</accession>
<keyword id="KW-0025">Alternative splicing</keyword>
<keyword id="KW-0963">Cytoplasm</keyword>
<keyword id="KW-0206">Cytoskeleton</keyword>
<keyword id="KW-0472">Membrane</keyword>
<keyword id="KW-1185">Reference proteome</keyword>
<keyword id="KW-0677">Repeat</keyword>
<keyword id="KW-0853">WD repeat</keyword>
<dbReference type="EMBL" id="CR760964">
    <property type="protein sequence ID" value="CAJ82079.1"/>
    <property type="molecule type" value="mRNA"/>
</dbReference>
<dbReference type="EMBL" id="BC121844">
    <property type="protein sequence ID" value="AAI21845.1"/>
    <property type="molecule type" value="mRNA"/>
</dbReference>
<dbReference type="RefSeq" id="NP_001016458.1">
    <property type="nucleotide sequence ID" value="NM_001016458.2"/>
</dbReference>
<dbReference type="RefSeq" id="XP_012814476.1">
    <molecule id="Q0D2F4-1"/>
    <property type="nucleotide sequence ID" value="XM_012959022.3"/>
</dbReference>
<dbReference type="SMR" id="Q0D2F4"/>
<dbReference type="FunCoup" id="Q0D2F4">
    <property type="interactions" value="1878"/>
</dbReference>
<dbReference type="STRING" id="8364.ENSXETP00000043427"/>
<dbReference type="PaxDb" id="8364-ENSXETP00000045043"/>
<dbReference type="DNASU" id="549212"/>
<dbReference type="GeneID" id="549212"/>
<dbReference type="KEGG" id="xtr:549212"/>
<dbReference type="AGR" id="Xenbase:XB-GENE-946380"/>
<dbReference type="CTD" id="5521"/>
<dbReference type="Xenbase" id="XB-GENE-946380">
    <property type="gene designation" value="ppp2r2b"/>
</dbReference>
<dbReference type="eggNOG" id="KOG1354">
    <property type="taxonomic scope" value="Eukaryota"/>
</dbReference>
<dbReference type="HOGENOM" id="CLU_021713_3_3_1"/>
<dbReference type="InParanoid" id="Q0D2F4"/>
<dbReference type="OrthoDB" id="6274823at2759"/>
<dbReference type="Proteomes" id="UP000008143">
    <property type="component" value="Chromosome 3"/>
</dbReference>
<dbReference type="Bgee" id="ENSXETG00000020864">
    <property type="expression patterns" value="Expressed in brain and 12 other cell types or tissues"/>
</dbReference>
<dbReference type="ExpressionAtlas" id="Q0D2F4">
    <property type="expression patterns" value="baseline"/>
</dbReference>
<dbReference type="GO" id="GO:0005737">
    <property type="term" value="C:cytoplasm"/>
    <property type="evidence" value="ECO:0007669"/>
    <property type="project" value="UniProtKB-SubCell"/>
</dbReference>
<dbReference type="GO" id="GO:0005856">
    <property type="term" value="C:cytoskeleton"/>
    <property type="evidence" value="ECO:0007669"/>
    <property type="project" value="UniProtKB-SubCell"/>
</dbReference>
<dbReference type="GO" id="GO:0016020">
    <property type="term" value="C:membrane"/>
    <property type="evidence" value="ECO:0007669"/>
    <property type="project" value="UniProtKB-SubCell"/>
</dbReference>
<dbReference type="GO" id="GO:0000159">
    <property type="term" value="C:protein phosphatase type 2A complex"/>
    <property type="evidence" value="ECO:0007669"/>
    <property type="project" value="InterPro"/>
</dbReference>
<dbReference type="GO" id="GO:0019888">
    <property type="term" value="F:protein phosphatase regulator activity"/>
    <property type="evidence" value="ECO:0007669"/>
    <property type="project" value="InterPro"/>
</dbReference>
<dbReference type="FunFam" id="2.130.10.10:FF:000002">
    <property type="entry name" value="Serine/threonine-protein phosphatase 2A 55 kDa regulatory subunit B"/>
    <property type="match status" value="1"/>
</dbReference>
<dbReference type="Gene3D" id="2.130.10.10">
    <property type="entry name" value="YVTN repeat-like/Quinoprotein amine dehydrogenase"/>
    <property type="match status" value="1"/>
</dbReference>
<dbReference type="InterPro" id="IPR000009">
    <property type="entry name" value="PP2A_PR55"/>
</dbReference>
<dbReference type="InterPro" id="IPR018067">
    <property type="entry name" value="PP2A_PR55_CS"/>
</dbReference>
<dbReference type="InterPro" id="IPR015943">
    <property type="entry name" value="WD40/YVTN_repeat-like_dom_sf"/>
</dbReference>
<dbReference type="InterPro" id="IPR036322">
    <property type="entry name" value="WD40_repeat_dom_sf"/>
</dbReference>
<dbReference type="InterPro" id="IPR001680">
    <property type="entry name" value="WD40_rpt"/>
</dbReference>
<dbReference type="PANTHER" id="PTHR11871">
    <property type="entry name" value="PROTEIN PHOSPHATASE PP2A REGULATORY SUBUNIT B"/>
    <property type="match status" value="1"/>
</dbReference>
<dbReference type="PIRSF" id="PIRSF037309">
    <property type="entry name" value="PP2A_PR55"/>
    <property type="match status" value="1"/>
</dbReference>
<dbReference type="PRINTS" id="PR00600">
    <property type="entry name" value="PP2APR55"/>
</dbReference>
<dbReference type="SMART" id="SM00320">
    <property type="entry name" value="WD40"/>
    <property type="match status" value="6"/>
</dbReference>
<dbReference type="SUPFAM" id="SSF50978">
    <property type="entry name" value="WD40 repeat-like"/>
    <property type="match status" value="1"/>
</dbReference>
<dbReference type="PROSITE" id="PS01024">
    <property type="entry name" value="PR55_1"/>
    <property type="match status" value="1"/>
</dbReference>
<dbReference type="PROSITE" id="PS01025">
    <property type="entry name" value="PR55_2"/>
    <property type="match status" value="1"/>
</dbReference>
<dbReference type="PROSITE" id="PS00678">
    <property type="entry name" value="WD_REPEATS_1"/>
    <property type="match status" value="1"/>
</dbReference>
<feature type="chain" id="PRO_0000383350" description="Serine/threonine-protein phosphatase 2A 55 kDa regulatory subunit B beta isoform">
    <location>
        <begin position="1"/>
        <end position="443"/>
    </location>
</feature>
<feature type="repeat" description="WD 1">
    <location>
        <begin position="22"/>
        <end position="61"/>
    </location>
</feature>
<feature type="repeat" description="WD 2">
    <location>
        <begin position="87"/>
        <end position="128"/>
    </location>
</feature>
<feature type="repeat" description="WD 3">
    <location>
        <begin position="171"/>
        <end position="209"/>
    </location>
</feature>
<feature type="repeat" description="WD 4">
    <location>
        <begin position="220"/>
        <end position="260"/>
    </location>
</feature>
<feature type="repeat" description="WD 5">
    <location>
        <begin position="279"/>
        <end position="317"/>
    </location>
</feature>
<feature type="repeat" description="WD 6">
    <location>
        <begin position="334"/>
        <end position="375"/>
    </location>
</feature>
<feature type="repeat" description="WD 7">
    <location>
        <begin position="410"/>
        <end position="443"/>
    </location>
</feature>
<feature type="splice variant" id="VSP_037986" description="In isoform 2." evidence="2">
    <original>MEEDIDTRKINSSFLRDHSYATE</original>
    <variation>MPCSIEDSVGSCNTRYSVMIPELQESIVFSEEARHCNGKYTRRQRKSS</variation>
    <location>
        <begin position="1"/>
        <end position="23"/>
    </location>
</feature>
<name>2ABB_XENTR</name>
<sequence>MEEDIDTRKINSSFLRDHSYATEADIISTVEFNSTGELLATGDKGGRVVIFQREQENKNQPHRRGEYNVYSTFQSHEPEFDYLKSLEIEEKINKIRWLPQQNAAYFLLSTNDKTVKLWKVSERDKRPEGYNLKDEDGRIRDPCTITSLRVPVLRPMDLMVEATPRRVFSNAHTYHINSISVNSDYETYMSADDLRINLWNLEITNRSFNIVDIKPTNMEELTEVITAAEFHPHNCNTFVYSSSKGTIRLCDMRSSALCDRHSKLFEEPEDPSNRSFFSEIISSISDVKFNHSGRYIMTRDYLTVKVWDLNMENRPIETYQVHDYLRSKLCSLYENDCIFDKFECVWNGSDSVIMTGSYNNFFRMFDRNTKRDVTLEASRENSKPRAILKPRKVCVGGKRRKDEISVDSLDFSKKILHTAWHPSENIIAVAATNNLYIFQDKVN</sequence>
<reference key="1">
    <citation type="submission" date="2006-10" db="EMBL/GenBank/DDBJ databases">
        <authorList>
            <consortium name="Sanger Xenopus tropicalis EST/cDNA project"/>
        </authorList>
    </citation>
    <scope>NUCLEOTIDE SEQUENCE [LARGE SCALE MRNA] (ISOFORM 2)</scope>
    <source>
        <tissue>Egg</tissue>
    </source>
</reference>
<reference key="2">
    <citation type="submission" date="2006-08" db="EMBL/GenBank/DDBJ databases">
        <authorList>
            <consortium name="NIH - Xenopus Gene Collection (XGC) project"/>
        </authorList>
    </citation>
    <scope>NUCLEOTIDE SEQUENCE [LARGE SCALE MRNA] (ISOFORM 1)</scope>
    <source>
        <tissue>Brain</tissue>
    </source>
</reference>
<proteinExistence type="evidence at transcript level"/>
<gene>
    <name type="primary">ppp2r2b</name>
    <name type="synonym">ppp2r2c</name>
</gene>
<comment type="function">
    <text evidence="1">The B regulatory subunit might modulate substrate selectivity and catalytic activity, and might also direct the localization of the catalytic enzyme to a particular subcellular compartment. Negatively controls the initiation of oocyte maturation (By similarity).</text>
</comment>
<comment type="subunit">
    <text evidence="1">PP2A consists of a common heterodimeric core enzyme, composed of a 36 kDa catalytic subunit (subunit C) and a 65 kDa constant regulatory subunit (PR65 or subunit A), that associates with a variety of regulatory subunits.</text>
</comment>
<comment type="subcellular location">
    <subcellularLocation>
        <location evidence="1">Cytoplasm</location>
    </subcellularLocation>
    <subcellularLocation>
        <location evidence="1">Cytoplasm</location>
        <location evidence="1">Cytoskeleton</location>
    </subcellularLocation>
    <subcellularLocation>
        <location evidence="1">Membrane</location>
    </subcellularLocation>
</comment>
<comment type="alternative products">
    <event type="alternative splicing"/>
    <isoform>
        <id>Q0D2F4-1</id>
        <name>1</name>
        <sequence type="displayed"/>
    </isoform>
    <isoform>
        <id>Q0D2F4-2</id>
        <name>2</name>
        <sequence type="described" ref="VSP_037986"/>
    </isoform>
</comment>
<comment type="similarity">
    <text evidence="3">Belongs to the phosphatase 2A regulatory subunit B family.</text>
</comment>
<organism>
    <name type="scientific">Xenopus tropicalis</name>
    <name type="common">Western clawed frog</name>
    <name type="synonym">Silurana tropicalis</name>
    <dbReference type="NCBI Taxonomy" id="8364"/>
    <lineage>
        <taxon>Eukaryota</taxon>
        <taxon>Metazoa</taxon>
        <taxon>Chordata</taxon>
        <taxon>Craniata</taxon>
        <taxon>Vertebrata</taxon>
        <taxon>Euteleostomi</taxon>
        <taxon>Amphibia</taxon>
        <taxon>Batrachia</taxon>
        <taxon>Anura</taxon>
        <taxon>Pipoidea</taxon>
        <taxon>Pipidae</taxon>
        <taxon>Xenopodinae</taxon>
        <taxon>Xenopus</taxon>
        <taxon>Silurana</taxon>
    </lineage>
</organism>
<evidence type="ECO:0000250" key="1"/>
<evidence type="ECO:0000303" key="2">
    <source ref="1"/>
</evidence>
<evidence type="ECO:0000305" key="3"/>